<protein>
    <recommendedName>
        <fullName evidence="3">Ubiquitin-like modifier-activating enzyme 5</fullName>
        <shortName evidence="1">Ubiquitin-activating enzyme 5</shortName>
    </recommendedName>
    <alternativeName>
        <fullName evidence="3">UFM1-activating enzyme</fullName>
    </alternativeName>
    <alternativeName>
        <fullName evidence="2">Ubiquitin activating enzyme-like protein</fullName>
    </alternativeName>
</protein>
<reference key="1">
    <citation type="submission" date="2004-05" db="EMBL/GenBank/DDBJ databases">
        <title>Expression pattern of UBAL in embryo development.</title>
        <authorList>
            <person name="Xue P."/>
            <person name="Chen W."/>
            <person name="Zhang J."/>
            <person name="Ci H.L."/>
            <person name="Li Y.P."/>
        </authorList>
    </citation>
    <scope>NUCLEOTIDE SEQUENCE [MRNA]</scope>
</reference>
<name>UBA5_CHICK</name>
<proteinExistence type="evidence at transcript level"/>
<sequence length="397" mass="44178">MAERVELLERRVRELERELELARGGRASARARIETMSPEVTDSNPYSRLMALKRMGIVKDYEKIRTFTVAIVGVGGVGSVTAEMLTRCGIGKLLLFDYDKVELANMNRLFFQPHQAGLSKVQAAEHTLRNINPDVQFEVHNYNITTLDNFEHFMDRISNGALEEGKPVDLVLSCVDNFEARMAINTACNELGQIWMESGVSENAVSGHIQLIIPGESACFACAPPLVVAANIDEKTLKREGVCAASLPTTMGVVAGILVQNVLKYLLNFGTVSYYLGYNAMQDFFPTMAMKPNPQCSDQNCRKQQENYKIKEAAQPKQEEIHQEEEIVHEDNDWGIELVSETTEDELKAASGPVPDLPVGITVAYTIPNKEENLTAEETVAESEESLEDLMAKMRNL</sequence>
<gene>
    <name evidence="1" type="primary">UBA5</name>
    <name evidence="2" type="synonym">UBAL</name>
</gene>
<organism>
    <name type="scientific">Gallus gallus</name>
    <name type="common">Chicken</name>
    <dbReference type="NCBI Taxonomy" id="9031"/>
    <lineage>
        <taxon>Eukaryota</taxon>
        <taxon>Metazoa</taxon>
        <taxon>Chordata</taxon>
        <taxon>Craniata</taxon>
        <taxon>Vertebrata</taxon>
        <taxon>Euteleostomi</taxon>
        <taxon>Archelosauria</taxon>
        <taxon>Archosauria</taxon>
        <taxon>Dinosauria</taxon>
        <taxon>Saurischia</taxon>
        <taxon>Theropoda</taxon>
        <taxon>Coelurosauria</taxon>
        <taxon>Aves</taxon>
        <taxon>Neognathae</taxon>
        <taxon>Galloanserae</taxon>
        <taxon>Galliformes</taxon>
        <taxon>Phasianidae</taxon>
        <taxon>Phasianinae</taxon>
        <taxon>Gallus</taxon>
    </lineage>
</organism>
<comment type="function">
    <text evidence="1">E1-like enzyme which specifically catalyzes the first step in ufmylation. Activates UFM1 by first adenylating its C-terminal glycine residue with ATP, and thereafter linking this residue to the side chain of a cysteine residue in E1, yielding a UFM1-E1 thioester and free AMP. Activates UFM1 via a trans-binding mechanism, in which UFM1 interacts with distinct sites in both subunits of the UBA5 homodimer. Trans-binding also promotes stabilization of the UBA5 homodimer, and enhances ATP-binding. Transfer of UFM1 from UBA5 to the E2-like enzyme UFC1 also takes place using a trans mechanism. Ufmylation plays a key role in various processes, such as ribosome recycling, response to DNA damage, interferon response or reticulophagy (also called ER-phagy).</text>
</comment>
<comment type="subunit">
    <text evidence="1">Homodimer; homodimerization is required for UFM1 activation. Interacts (via UIS motif) with UFM1; binds UFM1 via a trans-binding mechanism in which UFM1 interacts with distinct sites in both subunits of the UBA5 homodimer. Interacts (via C-terminus) with UFC1.</text>
</comment>
<comment type="subcellular location">
    <subcellularLocation>
        <location evidence="1">Cytoplasm</location>
    </subcellularLocation>
    <subcellularLocation>
        <location evidence="1">Nucleus</location>
    </subcellularLocation>
    <subcellularLocation>
        <location evidence="1">Endoplasmic reticulum membrane</location>
    </subcellularLocation>
    <subcellularLocation>
        <location evidence="1">Golgi apparatus</location>
    </subcellularLocation>
</comment>
<comment type="domain">
    <text evidence="1">The UFC1-binding sequence (UFC) motif mediates interaction with UFC1.</text>
</comment>
<comment type="domain">
    <text evidence="1">The linker region is required to activate the active site of UFC1: it region moves next to active site of UFC1 to reduce the amount of water molecules in the vicinity of UFC1's active site and thereby elevate the nucleophilic activity of UFC1 active site.</text>
</comment>
<comment type="domain">
    <text evidence="1">The UFM1-interacting sequence (UIS) motif mediates interaction with both UFM1 and LC3/GABARAP proteins (GABARAP, GABARAPL1 and GABARAPL2).</text>
</comment>
<comment type="similarity">
    <text evidence="3">Belongs to the ubiquitin-activating E1 family. UBA5 subfamily.</text>
</comment>
<keyword id="KW-0067">ATP-binding</keyword>
<keyword id="KW-0963">Cytoplasm</keyword>
<keyword id="KW-0256">Endoplasmic reticulum</keyword>
<keyword id="KW-0333">Golgi apparatus</keyword>
<keyword id="KW-0472">Membrane</keyword>
<keyword id="KW-0479">Metal-binding</keyword>
<keyword id="KW-0547">Nucleotide-binding</keyword>
<keyword id="KW-0539">Nucleus</keyword>
<keyword id="KW-1185">Reference proteome</keyword>
<keyword id="KW-0833">Ubl conjugation pathway</keyword>
<keyword id="KW-0862">Zinc</keyword>
<dbReference type="EMBL" id="AY620963">
    <property type="protein sequence ID" value="AAT39515.1"/>
    <property type="molecule type" value="mRNA"/>
</dbReference>
<dbReference type="RefSeq" id="NP_001001765.1">
    <property type="nucleotide sequence ID" value="NM_001001765.1"/>
</dbReference>
<dbReference type="SMR" id="Q6IVA4"/>
<dbReference type="FunCoup" id="Q6IVA4">
    <property type="interactions" value="1688"/>
</dbReference>
<dbReference type="STRING" id="9031.ENSGALP00000057947"/>
<dbReference type="PaxDb" id="9031-ENSGALP00000019110"/>
<dbReference type="GeneID" id="414879"/>
<dbReference type="KEGG" id="gga:414879"/>
<dbReference type="CTD" id="79876"/>
<dbReference type="VEuPathDB" id="HostDB:geneid_414879"/>
<dbReference type="eggNOG" id="KOG2336">
    <property type="taxonomic scope" value="Eukaryota"/>
</dbReference>
<dbReference type="InParanoid" id="Q6IVA4"/>
<dbReference type="OrthoDB" id="206053at2759"/>
<dbReference type="PhylomeDB" id="Q6IVA4"/>
<dbReference type="PRO" id="PR:Q6IVA4"/>
<dbReference type="Proteomes" id="UP000000539">
    <property type="component" value="Unassembled WGS sequence"/>
</dbReference>
<dbReference type="GO" id="GO:0005737">
    <property type="term" value="C:cytoplasm"/>
    <property type="evidence" value="ECO:0000318"/>
    <property type="project" value="GO_Central"/>
</dbReference>
<dbReference type="GO" id="GO:0005829">
    <property type="term" value="C:cytosol"/>
    <property type="evidence" value="ECO:0000318"/>
    <property type="project" value="GO_Central"/>
</dbReference>
<dbReference type="GO" id="GO:0005789">
    <property type="term" value="C:endoplasmic reticulum membrane"/>
    <property type="evidence" value="ECO:0000250"/>
    <property type="project" value="UniProtKB"/>
</dbReference>
<dbReference type="GO" id="GO:0005794">
    <property type="term" value="C:Golgi apparatus"/>
    <property type="evidence" value="ECO:0007669"/>
    <property type="project" value="UniProtKB-SubCell"/>
</dbReference>
<dbReference type="GO" id="GO:0005634">
    <property type="term" value="C:nucleus"/>
    <property type="evidence" value="ECO:0007669"/>
    <property type="project" value="UniProtKB-SubCell"/>
</dbReference>
<dbReference type="GO" id="GO:0005524">
    <property type="term" value="F:ATP binding"/>
    <property type="evidence" value="ECO:0007669"/>
    <property type="project" value="UniProtKB-KW"/>
</dbReference>
<dbReference type="GO" id="GO:0042803">
    <property type="term" value="F:protein homodimerization activity"/>
    <property type="evidence" value="ECO:0000250"/>
    <property type="project" value="UniProtKB"/>
</dbReference>
<dbReference type="GO" id="GO:0071566">
    <property type="term" value="F:UFM1 activating enzyme activity"/>
    <property type="evidence" value="ECO:0000250"/>
    <property type="project" value="UniProtKB"/>
</dbReference>
<dbReference type="GO" id="GO:0008270">
    <property type="term" value="F:zinc ion binding"/>
    <property type="evidence" value="ECO:0000250"/>
    <property type="project" value="UniProtKB"/>
</dbReference>
<dbReference type="GO" id="GO:0030218">
    <property type="term" value="P:erythrocyte differentiation"/>
    <property type="evidence" value="ECO:0000250"/>
    <property type="project" value="UniProtKB"/>
</dbReference>
<dbReference type="GO" id="GO:0030219">
    <property type="term" value="P:megakaryocyte differentiation"/>
    <property type="evidence" value="ECO:0000250"/>
    <property type="project" value="UniProtKB"/>
</dbReference>
<dbReference type="GO" id="GO:1990592">
    <property type="term" value="P:protein K69-linked ufmylation"/>
    <property type="evidence" value="ECO:0000250"/>
    <property type="project" value="UniProtKB"/>
</dbReference>
<dbReference type="GO" id="GO:0071569">
    <property type="term" value="P:protein ufmylation"/>
    <property type="evidence" value="ECO:0000250"/>
    <property type="project" value="UniProtKB"/>
</dbReference>
<dbReference type="GO" id="GO:0034976">
    <property type="term" value="P:response to endoplasmic reticulum stress"/>
    <property type="evidence" value="ECO:0000250"/>
    <property type="project" value="UniProtKB"/>
</dbReference>
<dbReference type="GO" id="GO:0061709">
    <property type="term" value="P:reticulophagy"/>
    <property type="evidence" value="ECO:0000250"/>
    <property type="project" value="UniProtKB"/>
</dbReference>
<dbReference type="CDD" id="cd00757">
    <property type="entry name" value="ThiF_MoeB_HesA_family"/>
    <property type="match status" value="1"/>
</dbReference>
<dbReference type="FunFam" id="3.40.50.720:FF:000066">
    <property type="entry name" value="Putative ubiquitin-like modifier-activating enzyme 5"/>
    <property type="match status" value="1"/>
</dbReference>
<dbReference type="Gene3D" id="3.40.50.720">
    <property type="entry name" value="NAD(P)-binding Rossmann-like Domain"/>
    <property type="match status" value="1"/>
</dbReference>
<dbReference type="InterPro" id="IPR029752">
    <property type="entry name" value="D-isomer_DH_CS1"/>
</dbReference>
<dbReference type="InterPro" id="IPR045886">
    <property type="entry name" value="ThiF/MoeB/HesA"/>
</dbReference>
<dbReference type="InterPro" id="IPR000594">
    <property type="entry name" value="ThiF_NAD_FAD-bd"/>
</dbReference>
<dbReference type="InterPro" id="IPR035985">
    <property type="entry name" value="Ubiquitin-activating_enz"/>
</dbReference>
<dbReference type="PANTHER" id="PTHR10953">
    <property type="entry name" value="UBIQUITIN-ACTIVATING ENZYME E1"/>
    <property type="match status" value="1"/>
</dbReference>
<dbReference type="PANTHER" id="PTHR10953:SF9">
    <property type="entry name" value="UBIQUITIN-LIKE MODIFIER-ACTIVATING ENZYME 5"/>
    <property type="match status" value="1"/>
</dbReference>
<dbReference type="Pfam" id="PF00899">
    <property type="entry name" value="ThiF"/>
    <property type="match status" value="1"/>
</dbReference>
<dbReference type="SUPFAM" id="SSF69572">
    <property type="entry name" value="Activating enzymes of the ubiquitin-like proteins"/>
    <property type="match status" value="1"/>
</dbReference>
<evidence type="ECO:0000250" key="1">
    <source>
        <dbReference type="UniProtKB" id="Q9GZZ9"/>
    </source>
</evidence>
<evidence type="ECO:0000303" key="2">
    <source ref="1"/>
</evidence>
<evidence type="ECO:0000305" key="3"/>
<accession>Q6IVA4</accession>
<feature type="chain" id="PRO_0000391932" description="Ubiquitin-like modifier-activating enzyme 5">
    <location>
        <begin position="1"/>
        <end position="397"/>
    </location>
</feature>
<feature type="region of interest" description="Linker" evidence="1">
    <location>
        <begin position="340"/>
        <end position="370"/>
    </location>
</feature>
<feature type="short sequence motif" description="UFM1-interacting sequence (UIS)" evidence="1">
    <location>
        <begin position="327"/>
        <end position="339"/>
    </location>
</feature>
<feature type="short sequence motif" description="UFC1-binding sequence (UFC)" evidence="1">
    <location>
        <begin position="382"/>
        <end position="397"/>
    </location>
</feature>
<feature type="active site" description="Glycyl thioester intermediate" evidence="1">
    <location>
        <position position="243"/>
    </location>
</feature>
<feature type="binding site" evidence="1">
    <location>
        <position position="76"/>
    </location>
    <ligand>
        <name>ATP</name>
        <dbReference type="ChEBI" id="CHEBI:30616"/>
    </ligand>
</feature>
<feature type="binding site" evidence="1">
    <location>
        <position position="97"/>
    </location>
    <ligand>
        <name>ATP</name>
        <dbReference type="ChEBI" id="CHEBI:30616"/>
    </ligand>
</feature>
<feature type="binding site" evidence="1">
    <location>
        <position position="120"/>
    </location>
    <ligand>
        <name>ATP</name>
        <dbReference type="ChEBI" id="CHEBI:30616"/>
    </ligand>
</feature>
<feature type="binding site" evidence="1">
    <location>
        <position position="143"/>
    </location>
    <ligand>
        <name>ATP</name>
        <dbReference type="ChEBI" id="CHEBI:30616"/>
    </ligand>
</feature>
<feature type="binding site" evidence="1">
    <location>
        <position position="177"/>
    </location>
    <ligand>
        <name>ATP</name>
        <dbReference type="ChEBI" id="CHEBI:30616"/>
    </ligand>
</feature>
<feature type="binding site" evidence="1">
    <location>
        <position position="219"/>
    </location>
    <ligand>
        <name>Zn(2+)</name>
        <dbReference type="ChEBI" id="CHEBI:29105"/>
    </ligand>
</feature>
<feature type="binding site" evidence="1">
    <location>
        <position position="222"/>
    </location>
    <ligand>
        <name>Zn(2+)</name>
        <dbReference type="ChEBI" id="CHEBI:29105"/>
    </ligand>
</feature>
<feature type="binding site" evidence="1">
    <location>
        <position position="296"/>
    </location>
    <ligand>
        <name>Zn(2+)</name>
        <dbReference type="ChEBI" id="CHEBI:29105"/>
    </ligand>
</feature>
<feature type="binding site" evidence="1">
    <location>
        <position position="301"/>
    </location>
    <ligand>
        <name>Zn(2+)</name>
        <dbReference type="ChEBI" id="CHEBI:29105"/>
    </ligand>
</feature>